<keyword id="KW-0413">Isomerase</keyword>
<keyword id="KW-0819">tRNA processing</keyword>
<protein>
    <recommendedName>
        <fullName evidence="1">tRNA pseudouridine synthase A</fullName>
        <ecNumber evidence="1">5.4.99.12</ecNumber>
    </recommendedName>
    <alternativeName>
        <fullName evidence="1">tRNA pseudouridine(38-40) synthase</fullName>
    </alternativeName>
    <alternativeName>
        <fullName evidence="1">tRNA pseudouridylate synthase I</fullName>
    </alternativeName>
    <alternativeName>
        <fullName evidence="1">tRNA-uridine isomerase I</fullName>
    </alternativeName>
</protein>
<reference key="1">
    <citation type="journal article" date="2010" name="J. Bacteriol.">
        <title>Whole genome sequences of two Xylella fastidiosa strains (M12 and M23) causing almond leaf scorch disease in California.</title>
        <authorList>
            <person name="Chen J."/>
            <person name="Xie G."/>
            <person name="Han S."/>
            <person name="Chertkov O."/>
            <person name="Sims D."/>
            <person name="Civerolo E.L."/>
        </authorList>
    </citation>
    <scope>NUCLEOTIDE SEQUENCE [LARGE SCALE GENOMIC DNA]</scope>
    <source>
        <strain>M12</strain>
    </source>
</reference>
<sequence length="257" mass="28674">MMRYALGVEYDGSEFLGWQQLGEMGPSVQATLQQALASVADASVRVVCAGRTDAGVHGQCQVVHFDSAVTRPPRAWILGTTTRLPSSVAVRWCVPTSEDFHARFSACARRYRYRLLNRQVRPALQHQFLSWERYPLDAQAMHVAAQMLLGENDFSAFRSAQCQALHARRELQAISVRRDAEVIEICVQANAFLHHMVRNIVGSLLMVGTGERPMEWIAELLAGRDRTMAGPTASARGLVFVGPLYPEKWHLPMEVSV</sequence>
<accession>B0U6K4</accession>
<name>TRUA_XYLFM</name>
<gene>
    <name evidence="1" type="primary">truA</name>
    <name type="ordered locus">Xfasm12_0726</name>
</gene>
<comment type="function">
    <text evidence="1">Formation of pseudouridine at positions 38, 39 and 40 in the anticodon stem and loop of transfer RNAs.</text>
</comment>
<comment type="catalytic activity">
    <reaction evidence="1">
        <text>uridine(38/39/40) in tRNA = pseudouridine(38/39/40) in tRNA</text>
        <dbReference type="Rhea" id="RHEA:22376"/>
        <dbReference type="Rhea" id="RHEA-COMP:10085"/>
        <dbReference type="Rhea" id="RHEA-COMP:10087"/>
        <dbReference type="ChEBI" id="CHEBI:65314"/>
        <dbReference type="ChEBI" id="CHEBI:65315"/>
        <dbReference type="EC" id="5.4.99.12"/>
    </reaction>
</comment>
<comment type="subunit">
    <text evidence="1">Homodimer.</text>
</comment>
<comment type="similarity">
    <text evidence="1">Belongs to the tRNA pseudouridine synthase TruA family.</text>
</comment>
<feature type="chain" id="PRO_1000097810" description="tRNA pseudouridine synthase A">
    <location>
        <begin position="1"/>
        <end position="257"/>
    </location>
</feature>
<feature type="active site" description="Nucleophile" evidence="1">
    <location>
        <position position="53"/>
    </location>
</feature>
<feature type="binding site" evidence="1">
    <location>
        <position position="111"/>
    </location>
    <ligand>
        <name>substrate</name>
    </ligand>
</feature>
<proteinExistence type="inferred from homology"/>
<dbReference type="EC" id="5.4.99.12" evidence="1"/>
<dbReference type="EMBL" id="CP000941">
    <property type="protein sequence ID" value="ACA11720.1"/>
    <property type="molecule type" value="Genomic_DNA"/>
</dbReference>
<dbReference type="SMR" id="B0U6K4"/>
<dbReference type="KEGG" id="xfm:Xfasm12_0726"/>
<dbReference type="HOGENOM" id="CLU_014673_0_2_6"/>
<dbReference type="GO" id="GO:0003723">
    <property type="term" value="F:RNA binding"/>
    <property type="evidence" value="ECO:0007669"/>
    <property type="project" value="InterPro"/>
</dbReference>
<dbReference type="GO" id="GO:0160147">
    <property type="term" value="F:tRNA pseudouridine(38-40) synthase activity"/>
    <property type="evidence" value="ECO:0007669"/>
    <property type="project" value="UniProtKB-EC"/>
</dbReference>
<dbReference type="GO" id="GO:0031119">
    <property type="term" value="P:tRNA pseudouridine synthesis"/>
    <property type="evidence" value="ECO:0007669"/>
    <property type="project" value="UniProtKB-UniRule"/>
</dbReference>
<dbReference type="CDD" id="cd02570">
    <property type="entry name" value="PseudoU_synth_EcTruA"/>
    <property type="match status" value="1"/>
</dbReference>
<dbReference type="FunFam" id="3.30.70.580:FF:000001">
    <property type="entry name" value="tRNA pseudouridine synthase A"/>
    <property type="match status" value="1"/>
</dbReference>
<dbReference type="Gene3D" id="3.30.70.660">
    <property type="entry name" value="Pseudouridine synthase I, catalytic domain, C-terminal subdomain"/>
    <property type="match status" value="1"/>
</dbReference>
<dbReference type="Gene3D" id="3.30.70.580">
    <property type="entry name" value="Pseudouridine synthase I, catalytic domain, N-terminal subdomain"/>
    <property type="match status" value="1"/>
</dbReference>
<dbReference type="HAMAP" id="MF_00171">
    <property type="entry name" value="TruA"/>
    <property type="match status" value="1"/>
</dbReference>
<dbReference type="InterPro" id="IPR020103">
    <property type="entry name" value="PsdUridine_synth_cat_dom_sf"/>
</dbReference>
<dbReference type="InterPro" id="IPR001406">
    <property type="entry name" value="PsdUridine_synth_TruA"/>
</dbReference>
<dbReference type="InterPro" id="IPR020097">
    <property type="entry name" value="PsdUridine_synth_TruA_a/b_dom"/>
</dbReference>
<dbReference type="InterPro" id="IPR020095">
    <property type="entry name" value="PsdUridine_synth_TruA_C"/>
</dbReference>
<dbReference type="InterPro" id="IPR020094">
    <property type="entry name" value="TruA/RsuA/RluB/E/F_N"/>
</dbReference>
<dbReference type="NCBIfam" id="TIGR00071">
    <property type="entry name" value="hisT_truA"/>
    <property type="match status" value="1"/>
</dbReference>
<dbReference type="PANTHER" id="PTHR11142">
    <property type="entry name" value="PSEUDOURIDYLATE SYNTHASE"/>
    <property type="match status" value="1"/>
</dbReference>
<dbReference type="PANTHER" id="PTHR11142:SF0">
    <property type="entry name" value="TRNA PSEUDOURIDINE SYNTHASE-LIKE 1"/>
    <property type="match status" value="1"/>
</dbReference>
<dbReference type="Pfam" id="PF01416">
    <property type="entry name" value="PseudoU_synth_1"/>
    <property type="match status" value="2"/>
</dbReference>
<dbReference type="PIRSF" id="PIRSF001430">
    <property type="entry name" value="tRNA_psdUrid_synth"/>
    <property type="match status" value="1"/>
</dbReference>
<dbReference type="SUPFAM" id="SSF55120">
    <property type="entry name" value="Pseudouridine synthase"/>
    <property type="match status" value="1"/>
</dbReference>
<organism>
    <name type="scientific">Xylella fastidiosa (strain M12)</name>
    <dbReference type="NCBI Taxonomy" id="405440"/>
    <lineage>
        <taxon>Bacteria</taxon>
        <taxon>Pseudomonadati</taxon>
        <taxon>Pseudomonadota</taxon>
        <taxon>Gammaproteobacteria</taxon>
        <taxon>Lysobacterales</taxon>
        <taxon>Lysobacteraceae</taxon>
        <taxon>Xylella</taxon>
    </lineage>
</organism>
<evidence type="ECO:0000255" key="1">
    <source>
        <dbReference type="HAMAP-Rule" id="MF_00171"/>
    </source>
</evidence>